<dbReference type="EC" id="3.1.3.16" evidence="1"/>
<dbReference type="EMBL" id="BX284603">
    <property type="protein sequence ID" value="CCD61882.1"/>
    <property type="molecule type" value="Genomic_DNA"/>
</dbReference>
<dbReference type="EMBL" id="BX284603">
    <property type="protein sequence ID" value="CCD61883.1"/>
    <property type="molecule type" value="Genomic_DNA"/>
</dbReference>
<dbReference type="PIR" id="T16354">
    <property type="entry name" value="T16354"/>
</dbReference>
<dbReference type="RefSeq" id="NP_001359798.1">
    <molecule id="P49595-2"/>
    <property type="nucleotide sequence ID" value="NM_001373838.3"/>
</dbReference>
<dbReference type="RefSeq" id="NP_741086.1">
    <molecule id="P49595-1"/>
    <property type="nucleotide sequence ID" value="NM_171075.8"/>
</dbReference>
<dbReference type="RefSeq" id="NP_741087.1">
    <property type="nucleotide sequence ID" value="NM_171076.3"/>
</dbReference>
<dbReference type="SMR" id="P49595"/>
<dbReference type="BioGRID" id="40503">
    <property type="interactions" value="4"/>
</dbReference>
<dbReference type="FunCoup" id="P49595">
    <property type="interactions" value="2924"/>
</dbReference>
<dbReference type="IntAct" id="P49595">
    <property type="interactions" value="2"/>
</dbReference>
<dbReference type="STRING" id="6239.F42G9.1a.1"/>
<dbReference type="iPTMnet" id="P49595"/>
<dbReference type="PaxDb" id="6239-F42G9.1a"/>
<dbReference type="PeptideAtlas" id="P49595"/>
<dbReference type="EnsemblMetazoa" id="F42G9.1a.1">
    <molecule id="P49595-1"/>
    <property type="protein sequence ID" value="F42G9.1a.1"/>
    <property type="gene ID" value="WBGene00018362"/>
</dbReference>
<dbReference type="EnsemblMetazoa" id="F42G9.1b.1">
    <molecule id="P49595-2"/>
    <property type="protein sequence ID" value="F42G9.1b.1"/>
    <property type="gene ID" value="WBGene00018362"/>
</dbReference>
<dbReference type="GeneID" id="175233"/>
<dbReference type="KEGG" id="cel:CELE_F42G9.1"/>
<dbReference type="UCSC" id="F42G9.1a">
    <property type="organism name" value="c. elegans"/>
</dbReference>
<dbReference type="AGR" id="WB:WBGene00018362"/>
<dbReference type="CTD" id="175233"/>
<dbReference type="WormBase" id="F42G9.1a">
    <molecule id="P49595-1"/>
    <property type="protein sequence ID" value="CE07231"/>
    <property type="gene ID" value="WBGene00018362"/>
    <property type="gene designation" value="ppm-1.G"/>
</dbReference>
<dbReference type="WormBase" id="F42G9.1b">
    <molecule id="P49595-2"/>
    <property type="protein sequence ID" value="CE30788"/>
    <property type="gene ID" value="WBGene00018362"/>
    <property type="gene designation" value="ppm-1.G"/>
</dbReference>
<dbReference type="eggNOG" id="KOG0699">
    <property type="taxonomic scope" value="Eukaryota"/>
</dbReference>
<dbReference type="GeneTree" id="ENSGT00940000165923"/>
<dbReference type="HOGENOM" id="CLU_013173_13_1_1"/>
<dbReference type="InParanoid" id="P49595"/>
<dbReference type="OMA" id="YCAMKLP"/>
<dbReference type="OrthoDB" id="10264738at2759"/>
<dbReference type="PhylomeDB" id="P49595"/>
<dbReference type="PRO" id="PR:P49595"/>
<dbReference type="Proteomes" id="UP000001940">
    <property type="component" value="Chromosome III"/>
</dbReference>
<dbReference type="Bgee" id="WBGene00018362">
    <property type="expression patterns" value="Expressed in adult organism and 5 other cell types or tissues"/>
</dbReference>
<dbReference type="GO" id="GO:0046872">
    <property type="term" value="F:metal ion binding"/>
    <property type="evidence" value="ECO:0007669"/>
    <property type="project" value="UniProtKB-KW"/>
</dbReference>
<dbReference type="GO" id="GO:0004722">
    <property type="term" value="F:protein serine/threonine phosphatase activity"/>
    <property type="evidence" value="ECO:0007669"/>
    <property type="project" value="UniProtKB-EC"/>
</dbReference>
<dbReference type="GO" id="GO:0007165">
    <property type="term" value="P:signal transduction"/>
    <property type="evidence" value="ECO:0000318"/>
    <property type="project" value="GO_Central"/>
</dbReference>
<dbReference type="CDD" id="cd00143">
    <property type="entry name" value="PP2Cc"/>
    <property type="match status" value="1"/>
</dbReference>
<dbReference type="FunFam" id="3.60.40.10:FF:000191">
    <property type="entry name" value="Probable protein phosphatase 2C F42G9.1"/>
    <property type="match status" value="1"/>
</dbReference>
<dbReference type="Gene3D" id="3.60.40.10">
    <property type="entry name" value="PPM-type phosphatase domain"/>
    <property type="match status" value="2"/>
</dbReference>
<dbReference type="InterPro" id="IPR015655">
    <property type="entry name" value="PP2C"/>
</dbReference>
<dbReference type="InterPro" id="IPR000222">
    <property type="entry name" value="PP2C_BS"/>
</dbReference>
<dbReference type="InterPro" id="IPR036457">
    <property type="entry name" value="PPM-type-like_dom_sf"/>
</dbReference>
<dbReference type="InterPro" id="IPR001932">
    <property type="entry name" value="PPM-type_phosphatase-like_dom"/>
</dbReference>
<dbReference type="PANTHER" id="PTHR13832:SF803">
    <property type="entry name" value="PROTEIN PHOSPHATASE 1G"/>
    <property type="match status" value="1"/>
</dbReference>
<dbReference type="PANTHER" id="PTHR13832">
    <property type="entry name" value="PROTEIN PHOSPHATASE 2C"/>
    <property type="match status" value="1"/>
</dbReference>
<dbReference type="Pfam" id="PF00481">
    <property type="entry name" value="PP2C"/>
    <property type="match status" value="2"/>
</dbReference>
<dbReference type="SMART" id="SM00332">
    <property type="entry name" value="PP2Cc"/>
    <property type="match status" value="1"/>
</dbReference>
<dbReference type="SUPFAM" id="SSF81606">
    <property type="entry name" value="PP2C-like"/>
    <property type="match status" value="1"/>
</dbReference>
<dbReference type="PROSITE" id="PS01032">
    <property type="entry name" value="PPM_1"/>
    <property type="match status" value="1"/>
</dbReference>
<dbReference type="PROSITE" id="PS51746">
    <property type="entry name" value="PPM_2"/>
    <property type="match status" value="1"/>
</dbReference>
<evidence type="ECO:0000250" key="1">
    <source>
        <dbReference type="UniProtKB" id="P35813"/>
    </source>
</evidence>
<evidence type="ECO:0000250" key="2">
    <source>
        <dbReference type="UniProtKB" id="P39966"/>
    </source>
</evidence>
<evidence type="ECO:0000255" key="3">
    <source>
        <dbReference type="PROSITE-ProRule" id="PRU01082"/>
    </source>
</evidence>
<evidence type="ECO:0000256" key="4">
    <source>
        <dbReference type="SAM" id="MobiDB-lite"/>
    </source>
</evidence>
<evidence type="ECO:0000305" key="5"/>
<evidence type="ECO:0000312" key="6">
    <source>
        <dbReference type="WormBase" id="F42G9.1a"/>
    </source>
</evidence>
<evidence type="ECO:0000312" key="7">
    <source>
        <dbReference type="WormBase" id="F42G9.1b"/>
    </source>
</evidence>
<organism>
    <name type="scientific">Caenorhabditis elegans</name>
    <dbReference type="NCBI Taxonomy" id="6239"/>
    <lineage>
        <taxon>Eukaryota</taxon>
        <taxon>Metazoa</taxon>
        <taxon>Ecdysozoa</taxon>
        <taxon>Nematoda</taxon>
        <taxon>Chromadorea</taxon>
        <taxon>Rhabditida</taxon>
        <taxon>Rhabditina</taxon>
        <taxon>Rhabditomorpha</taxon>
        <taxon>Rhabditoidea</taxon>
        <taxon>Rhabditidae</taxon>
        <taxon>Peloderinae</taxon>
        <taxon>Caenorhabditis</taxon>
    </lineage>
</organism>
<proteinExistence type="inferred from homology"/>
<name>PPM1G_CAEEL</name>
<feature type="chain" id="PRO_0000057762" description="Protein phosphatase ppm-1.G">
    <location>
        <begin position="1"/>
        <end position="491"/>
    </location>
</feature>
<feature type="domain" description="PPM-type phosphatase" evidence="3">
    <location>
        <begin position="23"/>
        <end position="486"/>
    </location>
</feature>
<feature type="region of interest" description="Disordered" evidence="4">
    <location>
        <begin position="112"/>
        <end position="136"/>
    </location>
</feature>
<feature type="region of interest" description="Disordered" evidence="4">
    <location>
        <begin position="170"/>
        <end position="294"/>
    </location>
</feature>
<feature type="compositionally biased region" description="Basic and acidic residues" evidence="4">
    <location>
        <begin position="112"/>
        <end position="125"/>
    </location>
</feature>
<feature type="compositionally biased region" description="Acidic residues" evidence="4">
    <location>
        <begin position="173"/>
        <end position="192"/>
    </location>
</feature>
<feature type="compositionally biased region" description="Acidic residues" evidence="4">
    <location>
        <begin position="260"/>
        <end position="294"/>
    </location>
</feature>
<feature type="binding site" evidence="1">
    <location>
        <position position="57"/>
    </location>
    <ligand>
        <name>Mn(2+)</name>
        <dbReference type="ChEBI" id="CHEBI:29035"/>
        <label>1</label>
    </ligand>
</feature>
<feature type="binding site" evidence="1">
    <location>
        <position position="57"/>
    </location>
    <ligand>
        <name>Mn(2+)</name>
        <dbReference type="ChEBI" id="CHEBI:29035"/>
        <label>2</label>
    </ligand>
</feature>
<feature type="binding site" evidence="1">
    <location>
        <position position="58"/>
    </location>
    <ligand>
        <name>Mn(2+)</name>
        <dbReference type="ChEBI" id="CHEBI:29035"/>
        <label>1</label>
    </ligand>
</feature>
<feature type="binding site" evidence="1">
    <location>
        <position position="428"/>
    </location>
    <ligand>
        <name>Mn(2+)</name>
        <dbReference type="ChEBI" id="CHEBI:29035"/>
        <label>2</label>
    </ligand>
</feature>
<feature type="binding site" evidence="1">
    <location>
        <position position="477"/>
    </location>
    <ligand>
        <name>Mn(2+)</name>
        <dbReference type="ChEBI" id="CHEBI:29035"/>
        <label>2</label>
    </ligand>
</feature>
<feature type="splice variant" id="VSP_060334" description="In isoform b." evidence="5">
    <original>MGAYLNKPIIEKEKEEGSGNGLSYACTTMQGWRVNQE</original>
    <variation>MDFKNVEYFYLKNFQ</variation>
    <location>
        <begin position="1"/>
        <end position="37"/>
    </location>
</feature>
<accession>P49595</accession>
<accession>Q8MNS3</accession>
<keyword id="KW-0025">Alternative splicing</keyword>
<keyword id="KW-0378">Hydrolase</keyword>
<keyword id="KW-0460">Magnesium</keyword>
<keyword id="KW-0464">Manganese</keyword>
<keyword id="KW-0479">Metal-binding</keyword>
<keyword id="KW-0904">Protein phosphatase</keyword>
<keyword id="KW-1185">Reference proteome</keyword>
<gene>
    <name evidence="6" type="primary">ppm-1.G</name>
    <name evidence="6" type="ORF">F42G9.1</name>
</gene>
<sequence length="491" mass="53142">MGAYLNKPIIEKEKEEGSGNGLSYACTTMQGWRVNQEDAHNCVVDLHTDWHMFGVYDGHGGTEVSKFTSAKLPDFLKERKFWEADDVAECLQKAFVDFDDFIRAEESMKELKDIGDEGKPKKAGGEADSEDEADRIDTIEEASVPLAELLKRYGGAGVGKSLLSAFLAKGDVSDDSEDEDEDEEEAEEQDDTEEKKENEDASAEVVIENAEDKEEEEGSPKKKGQKRCQKSPIQSEAKKSKSETDAETAPSSSSGVDGVATEEEDEDDSDKEFVADEEEDDEDAEDEQSDEEMVDGSLAPLLLGSGGAEVPGEDSGTTACVCLVGKDKVIVANAGDSRAVLCRNGKAVDLSVDHKPEDEVETNRIHAAGGQIEDGRVNGGLNLSRAFGDHAYKKNQELGLKEQMITALPDVKIEALTPEDEFIVVACDGIWNSMESQQVVDFVRDLLAKGSSCAEVCDALCDACLADSTDGDGTGCDNMTVICTTFDRKSK</sequence>
<protein>
    <recommendedName>
        <fullName evidence="5">Protein phosphatase ppm-1.G</fullName>
        <ecNumber evidence="1">3.1.3.16</ecNumber>
    </recommendedName>
    <alternativeName>
        <fullName evidence="5">Protein phosphatase 2C isoform gamma homolog</fullName>
        <shortName evidence="5">PP2C-gamma</shortName>
    </alternativeName>
    <alternativeName>
        <fullName evidence="5">Protein phosphatase magnesium-dependent 1 gamma homolog</fullName>
    </alternativeName>
</protein>
<reference key="1">
    <citation type="journal article" date="1998" name="Science">
        <title>Genome sequence of the nematode C. elegans: a platform for investigating biology.</title>
        <authorList>
            <consortium name="The C. elegans sequencing consortium"/>
        </authorList>
    </citation>
    <scope>NUCLEOTIDE SEQUENCE [LARGE SCALE GENOMIC DNA]</scope>
    <source>
        <strain>Bristol N2</strain>
    </source>
</reference>
<comment type="catalytic activity">
    <reaction evidence="3">
        <text>O-phospho-L-seryl-[protein] + H2O = L-seryl-[protein] + phosphate</text>
        <dbReference type="Rhea" id="RHEA:20629"/>
        <dbReference type="Rhea" id="RHEA-COMP:9863"/>
        <dbReference type="Rhea" id="RHEA-COMP:11604"/>
        <dbReference type="ChEBI" id="CHEBI:15377"/>
        <dbReference type="ChEBI" id="CHEBI:29999"/>
        <dbReference type="ChEBI" id="CHEBI:43474"/>
        <dbReference type="ChEBI" id="CHEBI:83421"/>
        <dbReference type="EC" id="3.1.3.16"/>
    </reaction>
    <physiologicalReaction direction="left-to-right" evidence="5">
        <dbReference type="Rhea" id="RHEA:20630"/>
    </physiologicalReaction>
</comment>
<comment type="catalytic activity">
    <reaction evidence="2">
        <text>O-phospho-L-threonyl-[protein] + H2O = L-threonyl-[protein] + phosphate</text>
        <dbReference type="Rhea" id="RHEA:47004"/>
        <dbReference type="Rhea" id="RHEA-COMP:11060"/>
        <dbReference type="Rhea" id="RHEA-COMP:11605"/>
        <dbReference type="ChEBI" id="CHEBI:15377"/>
        <dbReference type="ChEBI" id="CHEBI:30013"/>
        <dbReference type="ChEBI" id="CHEBI:43474"/>
        <dbReference type="ChEBI" id="CHEBI:61977"/>
        <dbReference type="EC" id="3.1.3.16"/>
    </reaction>
    <physiologicalReaction direction="left-to-right" evidence="2">
        <dbReference type="Rhea" id="RHEA:47005"/>
    </physiologicalReaction>
</comment>
<comment type="cofactor">
    <cofactor evidence="1">
        <name>Mg(2+)</name>
        <dbReference type="ChEBI" id="CHEBI:18420"/>
    </cofactor>
    <cofactor evidence="1">
        <name>Mn(2+)</name>
        <dbReference type="ChEBI" id="CHEBI:29035"/>
    </cofactor>
    <text evidence="3">Binds 2 magnesium or manganese ions per subunit.</text>
</comment>
<comment type="alternative products">
    <event type="alternative splicing"/>
    <isoform>
        <id>P49595-1</id>
        <name evidence="6">a</name>
        <sequence type="displayed"/>
    </isoform>
    <isoform>
        <id>P49595-2</id>
        <name evidence="7">b</name>
        <sequence type="described" ref="VSP_060334"/>
    </isoform>
</comment>
<comment type="similarity">
    <text evidence="5">Belongs to the PP2C family.</text>
</comment>